<name>RS2_CLOP1</name>
<proteinExistence type="inferred from homology"/>
<reference key="1">
    <citation type="journal article" date="2006" name="Genome Res.">
        <title>Skewed genomic variability in strains of the toxigenic bacterial pathogen, Clostridium perfringens.</title>
        <authorList>
            <person name="Myers G.S.A."/>
            <person name="Rasko D.A."/>
            <person name="Cheung J.K."/>
            <person name="Ravel J."/>
            <person name="Seshadri R."/>
            <person name="DeBoy R.T."/>
            <person name="Ren Q."/>
            <person name="Varga J."/>
            <person name="Awad M.M."/>
            <person name="Brinkac L.M."/>
            <person name="Daugherty S.C."/>
            <person name="Haft D.H."/>
            <person name="Dodson R.J."/>
            <person name="Madupu R."/>
            <person name="Nelson W.C."/>
            <person name="Rosovitz M.J."/>
            <person name="Sullivan S.A."/>
            <person name="Khouri H."/>
            <person name="Dimitrov G.I."/>
            <person name="Watkins K.L."/>
            <person name="Mulligan S."/>
            <person name="Benton J."/>
            <person name="Radune D."/>
            <person name="Fisher D.J."/>
            <person name="Atkins H.S."/>
            <person name="Hiscox T."/>
            <person name="Jost B.H."/>
            <person name="Billington S.J."/>
            <person name="Songer J.G."/>
            <person name="McClane B.A."/>
            <person name="Titball R.W."/>
            <person name="Rood J.I."/>
            <person name="Melville S.B."/>
            <person name="Paulsen I.T."/>
        </authorList>
    </citation>
    <scope>NUCLEOTIDE SEQUENCE [LARGE SCALE GENOMIC DNA]</scope>
    <source>
        <strain>ATCC 13124 / DSM 756 / JCM 1290 / NCIMB 6125 / NCTC 8237 / S 107 / Type A</strain>
    </source>
</reference>
<organism>
    <name type="scientific">Clostridium perfringens (strain ATCC 13124 / DSM 756 / JCM 1290 / NCIMB 6125 / NCTC 8237 / Type A)</name>
    <dbReference type="NCBI Taxonomy" id="195103"/>
    <lineage>
        <taxon>Bacteria</taxon>
        <taxon>Bacillati</taxon>
        <taxon>Bacillota</taxon>
        <taxon>Clostridia</taxon>
        <taxon>Eubacteriales</taxon>
        <taxon>Clostridiaceae</taxon>
        <taxon>Clostridium</taxon>
    </lineage>
</organism>
<comment type="similarity">
    <text evidence="1">Belongs to the universal ribosomal protein uS2 family.</text>
</comment>
<keyword id="KW-0687">Ribonucleoprotein</keyword>
<keyword id="KW-0689">Ribosomal protein</keyword>
<dbReference type="EMBL" id="CP000246">
    <property type="protein sequence ID" value="ABG83971.1"/>
    <property type="molecule type" value="Genomic_DNA"/>
</dbReference>
<dbReference type="RefSeq" id="WP_003470452.1">
    <property type="nucleotide sequence ID" value="NC_008261.1"/>
</dbReference>
<dbReference type="SMR" id="Q0TPQ3"/>
<dbReference type="STRING" id="195103.CPF_1954"/>
<dbReference type="PaxDb" id="195103-CPF_1954"/>
<dbReference type="GeneID" id="93001762"/>
<dbReference type="KEGG" id="cpf:CPF_1954"/>
<dbReference type="eggNOG" id="COG0052">
    <property type="taxonomic scope" value="Bacteria"/>
</dbReference>
<dbReference type="HOGENOM" id="CLU_040318_1_2_9"/>
<dbReference type="Proteomes" id="UP000001823">
    <property type="component" value="Chromosome"/>
</dbReference>
<dbReference type="GO" id="GO:0022627">
    <property type="term" value="C:cytosolic small ribosomal subunit"/>
    <property type="evidence" value="ECO:0007669"/>
    <property type="project" value="TreeGrafter"/>
</dbReference>
<dbReference type="GO" id="GO:0003735">
    <property type="term" value="F:structural constituent of ribosome"/>
    <property type="evidence" value="ECO:0007669"/>
    <property type="project" value="InterPro"/>
</dbReference>
<dbReference type="GO" id="GO:0006412">
    <property type="term" value="P:translation"/>
    <property type="evidence" value="ECO:0007669"/>
    <property type="project" value="UniProtKB-UniRule"/>
</dbReference>
<dbReference type="CDD" id="cd01425">
    <property type="entry name" value="RPS2"/>
    <property type="match status" value="1"/>
</dbReference>
<dbReference type="FunFam" id="1.10.287.610:FF:000001">
    <property type="entry name" value="30S ribosomal protein S2"/>
    <property type="match status" value="1"/>
</dbReference>
<dbReference type="Gene3D" id="3.40.50.10490">
    <property type="entry name" value="Glucose-6-phosphate isomerase like protein, domain 1"/>
    <property type="match status" value="1"/>
</dbReference>
<dbReference type="Gene3D" id="1.10.287.610">
    <property type="entry name" value="Helix hairpin bin"/>
    <property type="match status" value="1"/>
</dbReference>
<dbReference type="HAMAP" id="MF_00291_B">
    <property type="entry name" value="Ribosomal_uS2_B"/>
    <property type="match status" value="1"/>
</dbReference>
<dbReference type="InterPro" id="IPR001865">
    <property type="entry name" value="Ribosomal_uS2"/>
</dbReference>
<dbReference type="InterPro" id="IPR005706">
    <property type="entry name" value="Ribosomal_uS2_bac/mit/plastid"/>
</dbReference>
<dbReference type="InterPro" id="IPR018130">
    <property type="entry name" value="Ribosomal_uS2_CS"/>
</dbReference>
<dbReference type="InterPro" id="IPR023591">
    <property type="entry name" value="Ribosomal_uS2_flav_dom_sf"/>
</dbReference>
<dbReference type="NCBIfam" id="TIGR01011">
    <property type="entry name" value="rpsB_bact"/>
    <property type="match status" value="1"/>
</dbReference>
<dbReference type="PANTHER" id="PTHR12534">
    <property type="entry name" value="30S RIBOSOMAL PROTEIN S2 PROKARYOTIC AND ORGANELLAR"/>
    <property type="match status" value="1"/>
</dbReference>
<dbReference type="PANTHER" id="PTHR12534:SF0">
    <property type="entry name" value="SMALL RIBOSOMAL SUBUNIT PROTEIN US2M"/>
    <property type="match status" value="1"/>
</dbReference>
<dbReference type="Pfam" id="PF00318">
    <property type="entry name" value="Ribosomal_S2"/>
    <property type="match status" value="1"/>
</dbReference>
<dbReference type="PRINTS" id="PR00395">
    <property type="entry name" value="RIBOSOMALS2"/>
</dbReference>
<dbReference type="SUPFAM" id="SSF52313">
    <property type="entry name" value="Ribosomal protein S2"/>
    <property type="match status" value="1"/>
</dbReference>
<dbReference type="PROSITE" id="PS00962">
    <property type="entry name" value="RIBOSOMAL_S2_1"/>
    <property type="match status" value="1"/>
</dbReference>
<accession>Q0TPQ3</accession>
<gene>
    <name evidence="1" type="primary">rpsB</name>
    <name type="ordered locus">CPF_1954</name>
</gene>
<evidence type="ECO:0000255" key="1">
    <source>
        <dbReference type="HAMAP-Rule" id="MF_00291"/>
    </source>
</evidence>
<evidence type="ECO:0000305" key="2"/>
<sequence length="233" mass="26332">MSVISMKQLLEAGVHFGHQTRRWNPKMAPYIFTERNGIYIIDLQKTVKKAEEAYNFIREVSEAGKDVIFVGTKKQAQEAVKEEAERSNMYFVNHRWLGGMLTNFTTIKTRINRLNKLDEMEQDGTFDVLPKKEVIKLKLEREKLQRNLGGIKELDASNIGAMFVVDPRKEKNAIAEAKILGIPVVAIVDTNCDPEEVDYVIPGNDDAIRAVKLIAGKMADAIIEGRQGEQLAE</sequence>
<protein>
    <recommendedName>
        <fullName evidence="1">Small ribosomal subunit protein uS2</fullName>
    </recommendedName>
    <alternativeName>
        <fullName evidence="2">30S ribosomal protein S2</fullName>
    </alternativeName>
</protein>
<feature type="chain" id="PRO_1000003938" description="Small ribosomal subunit protein uS2">
    <location>
        <begin position="1"/>
        <end position="233"/>
    </location>
</feature>